<evidence type="ECO:0000250" key="1"/>
<evidence type="ECO:0000256" key="2">
    <source>
        <dbReference type="SAM" id="MobiDB-lite"/>
    </source>
</evidence>
<evidence type="ECO:0000305" key="3"/>
<protein>
    <recommendedName>
        <fullName>Probable serine acetyltransferase 3</fullName>
        <ecNumber>2.3.1.30</ecNumber>
    </recommendedName>
    <alternativeName>
        <fullName>OsSERAT2;1</fullName>
    </alternativeName>
</protein>
<accession>Q0DUI1</accession>
<accession>A0A0P0VTZ2</accession>
<accession>Q10QS6</accession>
<organism>
    <name type="scientific">Oryza sativa subsp. japonica</name>
    <name type="common">Rice</name>
    <dbReference type="NCBI Taxonomy" id="39947"/>
    <lineage>
        <taxon>Eukaryota</taxon>
        <taxon>Viridiplantae</taxon>
        <taxon>Streptophyta</taxon>
        <taxon>Embryophyta</taxon>
        <taxon>Tracheophyta</taxon>
        <taxon>Spermatophyta</taxon>
        <taxon>Magnoliopsida</taxon>
        <taxon>Liliopsida</taxon>
        <taxon>Poales</taxon>
        <taxon>Poaceae</taxon>
        <taxon>BOP clade</taxon>
        <taxon>Oryzoideae</taxon>
        <taxon>Oryzeae</taxon>
        <taxon>Oryzinae</taxon>
        <taxon>Oryza</taxon>
        <taxon>Oryza sativa</taxon>
    </lineage>
</organism>
<sequence length="301" mass="31500">MAACVDKWPAAYPCRLPDKFYCALPDCTTTDRPVAPAPAASGSSGDYVWDALRAEAQDDADDEPLLRKFYHDLVLSRPSLESALASLLAAKLCIPGALPQDQLRDLLAGALAAHPEAGRAARADLAAARDRDPACAKMVHCFLYYRGFLALQAHRAAHALWSDNRRAPALLLQSRASEVFGVDIHPGARIGGGILLDHATGVVIGETAVVGYGVSILHAVTLGGTGKESGDRHPKVGDGVLIGAGASVLGNVHIGDGAEIGAGAIVLRDVADGTTAKPIIGKKAEPQRELPGVTMEQRWSD</sequence>
<keyword id="KW-0012">Acyltransferase</keyword>
<keyword id="KW-0028">Amino-acid biosynthesis</keyword>
<keyword id="KW-1185">Reference proteome</keyword>
<keyword id="KW-0808">Transferase</keyword>
<proteinExistence type="evidence at transcript level"/>
<gene>
    <name type="primary">SAT3</name>
    <name type="ordered locus">Os03g0185000</name>
    <name type="ordered locus">LOC_Os03g08660</name>
</gene>
<feature type="chain" id="PRO_0000363660" description="Probable serine acetyltransferase 3">
    <location>
        <begin position="1"/>
        <end position="301"/>
    </location>
</feature>
<feature type="region of interest" description="Disordered" evidence="2">
    <location>
        <begin position="280"/>
        <end position="301"/>
    </location>
</feature>
<comment type="catalytic activity">
    <reaction>
        <text>L-serine + acetyl-CoA = O-acetyl-L-serine + CoA</text>
        <dbReference type="Rhea" id="RHEA:24560"/>
        <dbReference type="ChEBI" id="CHEBI:33384"/>
        <dbReference type="ChEBI" id="CHEBI:57287"/>
        <dbReference type="ChEBI" id="CHEBI:57288"/>
        <dbReference type="ChEBI" id="CHEBI:58340"/>
        <dbReference type="EC" id="2.3.1.30"/>
    </reaction>
</comment>
<comment type="pathway">
    <text>Amino-acid biosynthesis; L-cysteine biosynthesis; L-cysteine from L-serine: step 1/2.</text>
</comment>
<comment type="subunit">
    <text evidence="1">Homomultimer.</text>
</comment>
<comment type="similarity">
    <text evidence="3">Belongs to the transferase hexapeptide repeat family.</text>
</comment>
<reference key="1">
    <citation type="journal article" date="2005" name="Genome Res.">
        <title>Sequence, annotation, and analysis of synteny between rice chromosome 3 and diverged grass species.</title>
        <authorList>
            <consortium name="The rice chromosome 3 sequencing consortium"/>
            <person name="Buell C.R."/>
            <person name="Yuan Q."/>
            <person name="Ouyang S."/>
            <person name="Liu J."/>
            <person name="Zhu W."/>
            <person name="Wang A."/>
            <person name="Maiti R."/>
            <person name="Haas B."/>
            <person name="Wortman J."/>
            <person name="Pertea M."/>
            <person name="Jones K.M."/>
            <person name="Kim M."/>
            <person name="Overton L."/>
            <person name="Tsitrin T."/>
            <person name="Fadrosh D."/>
            <person name="Bera J."/>
            <person name="Weaver B."/>
            <person name="Jin S."/>
            <person name="Johri S."/>
            <person name="Reardon M."/>
            <person name="Webb K."/>
            <person name="Hill J."/>
            <person name="Moffat K."/>
            <person name="Tallon L."/>
            <person name="Van Aken S."/>
            <person name="Lewis M."/>
            <person name="Utterback T."/>
            <person name="Feldblyum T."/>
            <person name="Zismann V."/>
            <person name="Iobst S."/>
            <person name="Hsiao J."/>
            <person name="de Vazeille A.R."/>
            <person name="Salzberg S.L."/>
            <person name="White O."/>
            <person name="Fraser C.M."/>
            <person name="Yu Y."/>
            <person name="Kim H."/>
            <person name="Rambo T."/>
            <person name="Currie J."/>
            <person name="Collura K."/>
            <person name="Kernodle-Thompson S."/>
            <person name="Wei F."/>
            <person name="Kudrna K."/>
            <person name="Ammiraju J.S.S."/>
            <person name="Luo M."/>
            <person name="Goicoechea J.L."/>
            <person name="Wing R.A."/>
            <person name="Henry D."/>
            <person name="Oates R."/>
            <person name="Palmer M."/>
            <person name="Pries G."/>
            <person name="Saski C."/>
            <person name="Simmons J."/>
            <person name="Soderlund C."/>
            <person name="Nelson W."/>
            <person name="de la Bastide M."/>
            <person name="Spiegel L."/>
            <person name="Nascimento L."/>
            <person name="Huang E."/>
            <person name="Preston R."/>
            <person name="Zutavern T."/>
            <person name="Palmer L."/>
            <person name="O'Shaughnessy A."/>
            <person name="Dike S."/>
            <person name="McCombie W.R."/>
            <person name="Minx P."/>
            <person name="Cordum H."/>
            <person name="Wilson R."/>
            <person name="Jin W."/>
            <person name="Lee H.R."/>
            <person name="Jiang J."/>
            <person name="Jackson S."/>
        </authorList>
    </citation>
    <scope>NUCLEOTIDE SEQUENCE [LARGE SCALE GENOMIC DNA]</scope>
    <source>
        <strain>cv. Nipponbare</strain>
    </source>
</reference>
<reference key="2">
    <citation type="journal article" date="2005" name="Nature">
        <title>The map-based sequence of the rice genome.</title>
        <authorList>
            <consortium name="International rice genome sequencing project (IRGSP)"/>
        </authorList>
    </citation>
    <scope>NUCLEOTIDE SEQUENCE [LARGE SCALE GENOMIC DNA]</scope>
    <source>
        <strain>cv. Nipponbare</strain>
    </source>
</reference>
<reference key="3">
    <citation type="journal article" date="2008" name="Nucleic Acids Res.">
        <title>The rice annotation project database (RAP-DB): 2008 update.</title>
        <authorList>
            <consortium name="The rice annotation project (RAP)"/>
        </authorList>
    </citation>
    <scope>GENOME REANNOTATION</scope>
    <source>
        <strain>cv. Nipponbare</strain>
    </source>
</reference>
<reference key="4">
    <citation type="journal article" date="2013" name="Rice">
        <title>Improvement of the Oryza sativa Nipponbare reference genome using next generation sequence and optical map data.</title>
        <authorList>
            <person name="Kawahara Y."/>
            <person name="de la Bastide M."/>
            <person name="Hamilton J.P."/>
            <person name="Kanamori H."/>
            <person name="McCombie W.R."/>
            <person name="Ouyang S."/>
            <person name="Schwartz D.C."/>
            <person name="Tanaka T."/>
            <person name="Wu J."/>
            <person name="Zhou S."/>
            <person name="Childs K.L."/>
            <person name="Davidson R.M."/>
            <person name="Lin H."/>
            <person name="Quesada-Ocampo L."/>
            <person name="Vaillancourt B."/>
            <person name="Sakai H."/>
            <person name="Lee S.S."/>
            <person name="Kim J."/>
            <person name="Numa H."/>
            <person name="Itoh T."/>
            <person name="Buell C.R."/>
            <person name="Matsumoto T."/>
        </authorList>
    </citation>
    <scope>GENOME REANNOTATION</scope>
    <source>
        <strain>cv. Nipponbare</strain>
    </source>
</reference>
<name>SAT3_ORYSJ</name>
<dbReference type="EC" id="2.3.1.30"/>
<dbReference type="EMBL" id="DP000009">
    <property type="protein sequence ID" value="ABF94351.1"/>
    <property type="molecule type" value="Genomic_DNA"/>
</dbReference>
<dbReference type="EMBL" id="AP008209">
    <property type="protein sequence ID" value="BAF11107.2"/>
    <property type="molecule type" value="Genomic_DNA"/>
</dbReference>
<dbReference type="EMBL" id="AP014959">
    <property type="protein sequence ID" value="BAS82666.1"/>
    <property type="molecule type" value="Genomic_DNA"/>
</dbReference>
<dbReference type="RefSeq" id="XP_015629961.1">
    <property type="nucleotide sequence ID" value="XM_015774475.1"/>
</dbReference>
<dbReference type="SMR" id="Q0DUI1"/>
<dbReference type="FunCoup" id="Q0DUI1">
    <property type="interactions" value="375"/>
</dbReference>
<dbReference type="STRING" id="39947.Q0DUI1"/>
<dbReference type="PaxDb" id="39947-Q0DUI1"/>
<dbReference type="EnsemblPlants" id="Os03t0185000-01">
    <property type="protein sequence ID" value="Os03t0185000-01"/>
    <property type="gene ID" value="Os03g0185000"/>
</dbReference>
<dbReference type="Gramene" id="Os03t0185000-01">
    <property type="protein sequence ID" value="Os03t0185000-01"/>
    <property type="gene ID" value="Os03g0185000"/>
</dbReference>
<dbReference type="KEGG" id="dosa:Os03g0185000"/>
<dbReference type="eggNOG" id="KOG4750">
    <property type="taxonomic scope" value="Eukaryota"/>
</dbReference>
<dbReference type="HOGENOM" id="CLU_051638_0_1_1"/>
<dbReference type="InParanoid" id="Q0DUI1"/>
<dbReference type="OMA" id="YTHAFLF"/>
<dbReference type="OrthoDB" id="25818at2759"/>
<dbReference type="PlantReactome" id="R-OSA-1119331">
    <property type="pathway name" value="Cysteine biosynthesis I"/>
</dbReference>
<dbReference type="UniPathway" id="UPA00136">
    <property type="reaction ID" value="UER00199"/>
</dbReference>
<dbReference type="Proteomes" id="UP000000763">
    <property type="component" value="Chromosome 3"/>
</dbReference>
<dbReference type="Proteomes" id="UP000059680">
    <property type="component" value="Chromosome 3"/>
</dbReference>
<dbReference type="GO" id="GO:0005829">
    <property type="term" value="C:cytosol"/>
    <property type="evidence" value="ECO:0000318"/>
    <property type="project" value="GO_Central"/>
</dbReference>
<dbReference type="GO" id="GO:0009001">
    <property type="term" value="F:serine O-acetyltransferase activity"/>
    <property type="evidence" value="ECO:0000318"/>
    <property type="project" value="GO_Central"/>
</dbReference>
<dbReference type="GO" id="GO:0006535">
    <property type="term" value="P:cysteine biosynthetic process from serine"/>
    <property type="evidence" value="ECO:0007669"/>
    <property type="project" value="InterPro"/>
</dbReference>
<dbReference type="CDD" id="cd03354">
    <property type="entry name" value="LbH_SAT"/>
    <property type="match status" value="1"/>
</dbReference>
<dbReference type="FunFam" id="1.10.3130.10:FF:000008">
    <property type="entry name" value="Probable serine acetyltransferase 4"/>
    <property type="match status" value="1"/>
</dbReference>
<dbReference type="FunFam" id="2.160.10.10:FF:000002">
    <property type="entry name" value="Serine acetyltransferase"/>
    <property type="match status" value="1"/>
</dbReference>
<dbReference type="Gene3D" id="2.160.10.10">
    <property type="entry name" value="Hexapeptide repeat proteins"/>
    <property type="match status" value="1"/>
</dbReference>
<dbReference type="Gene3D" id="1.10.3130.10">
    <property type="entry name" value="serine acetyltransferase, domain 1"/>
    <property type="match status" value="1"/>
</dbReference>
<dbReference type="InterPro" id="IPR001451">
    <property type="entry name" value="Hexapep"/>
</dbReference>
<dbReference type="InterPro" id="IPR018357">
    <property type="entry name" value="Hexapep_transf_CS"/>
</dbReference>
<dbReference type="InterPro" id="IPR045304">
    <property type="entry name" value="LbH_SAT"/>
</dbReference>
<dbReference type="InterPro" id="IPR010493">
    <property type="entry name" value="Ser_AcTrfase_N"/>
</dbReference>
<dbReference type="InterPro" id="IPR042122">
    <property type="entry name" value="Ser_AcTrfase_N_sf"/>
</dbReference>
<dbReference type="InterPro" id="IPR053376">
    <property type="entry name" value="Serine_acetyltransferase"/>
</dbReference>
<dbReference type="InterPro" id="IPR011004">
    <property type="entry name" value="Trimer_LpxA-like_sf"/>
</dbReference>
<dbReference type="NCBIfam" id="NF041874">
    <property type="entry name" value="EPS_EpsC"/>
    <property type="match status" value="1"/>
</dbReference>
<dbReference type="PANTHER" id="PTHR42811">
    <property type="entry name" value="SERINE ACETYLTRANSFERASE"/>
    <property type="match status" value="1"/>
</dbReference>
<dbReference type="Pfam" id="PF00132">
    <property type="entry name" value="Hexapep"/>
    <property type="match status" value="1"/>
</dbReference>
<dbReference type="Pfam" id="PF06426">
    <property type="entry name" value="SATase_N"/>
    <property type="match status" value="1"/>
</dbReference>
<dbReference type="SMART" id="SM00971">
    <property type="entry name" value="SATase_N"/>
    <property type="match status" value="1"/>
</dbReference>
<dbReference type="SUPFAM" id="SSF51161">
    <property type="entry name" value="Trimeric LpxA-like enzymes"/>
    <property type="match status" value="1"/>
</dbReference>
<dbReference type="PROSITE" id="PS00101">
    <property type="entry name" value="HEXAPEP_TRANSFERASES"/>
    <property type="match status" value="1"/>
</dbReference>